<accession>B2JLM6</accession>
<feature type="chain" id="PRO_0000387796" description="4-hydroxy-2-oxovalerate aldolase 1">
    <location>
        <begin position="1"/>
        <end position="349"/>
    </location>
</feature>
<feature type="domain" description="Pyruvate carboxyltransferase" evidence="1">
    <location>
        <begin position="5"/>
        <end position="257"/>
    </location>
</feature>
<feature type="active site" description="Proton acceptor" evidence="1">
    <location>
        <position position="17"/>
    </location>
</feature>
<feature type="binding site" evidence="1">
    <location>
        <begin position="13"/>
        <end position="14"/>
    </location>
    <ligand>
        <name>substrate</name>
    </ligand>
</feature>
<feature type="binding site" evidence="1">
    <location>
        <position position="14"/>
    </location>
    <ligand>
        <name>Mn(2+)</name>
        <dbReference type="ChEBI" id="CHEBI:29035"/>
    </ligand>
</feature>
<feature type="binding site" evidence="1">
    <location>
        <position position="167"/>
    </location>
    <ligand>
        <name>substrate</name>
    </ligand>
</feature>
<feature type="binding site" evidence="1">
    <location>
        <position position="196"/>
    </location>
    <ligand>
        <name>Mn(2+)</name>
        <dbReference type="ChEBI" id="CHEBI:29035"/>
    </ligand>
</feature>
<feature type="binding site" evidence="1">
    <location>
        <position position="196"/>
    </location>
    <ligand>
        <name>substrate</name>
    </ligand>
</feature>
<feature type="binding site" evidence="1">
    <location>
        <position position="198"/>
    </location>
    <ligand>
        <name>Mn(2+)</name>
        <dbReference type="ChEBI" id="CHEBI:29035"/>
    </ligand>
</feature>
<feature type="binding site" evidence="1">
    <location>
        <position position="287"/>
    </location>
    <ligand>
        <name>substrate</name>
    </ligand>
</feature>
<feature type="site" description="Transition state stabilizer" evidence="1">
    <location>
        <position position="13"/>
    </location>
</feature>
<dbReference type="EC" id="4.1.3.39" evidence="1"/>
<dbReference type="EMBL" id="CP001044">
    <property type="protein sequence ID" value="ACC72659.1"/>
    <property type="molecule type" value="Genomic_DNA"/>
</dbReference>
<dbReference type="RefSeq" id="WP_012402832.1">
    <property type="nucleotide sequence ID" value="NC_010623.1"/>
</dbReference>
<dbReference type="SMR" id="B2JLM6"/>
<dbReference type="STRING" id="391038.Bphy_3510"/>
<dbReference type="KEGG" id="bph:Bphy_3510"/>
<dbReference type="eggNOG" id="COG0119">
    <property type="taxonomic scope" value="Bacteria"/>
</dbReference>
<dbReference type="HOGENOM" id="CLU_049173_0_0_4"/>
<dbReference type="OrthoDB" id="9803573at2"/>
<dbReference type="Proteomes" id="UP000001192">
    <property type="component" value="Chromosome 2"/>
</dbReference>
<dbReference type="GO" id="GO:0003852">
    <property type="term" value="F:2-isopropylmalate synthase activity"/>
    <property type="evidence" value="ECO:0007669"/>
    <property type="project" value="TreeGrafter"/>
</dbReference>
<dbReference type="GO" id="GO:0008701">
    <property type="term" value="F:4-hydroxy-2-oxovalerate aldolase activity"/>
    <property type="evidence" value="ECO:0007669"/>
    <property type="project" value="UniProtKB-UniRule"/>
</dbReference>
<dbReference type="GO" id="GO:0030145">
    <property type="term" value="F:manganese ion binding"/>
    <property type="evidence" value="ECO:0007669"/>
    <property type="project" value="UniProtKB-UniRule"/>
</dbReference>
<dbReference type="GO" id="GO:0009056">
    <property type="term" value="P:catabolic process"/>
    <property type="evidence" value="ECO:0007669"/>
    <property type="project" value="UniProtKB-KW"/>
</dbReference>
<dbReference type="GO" id="GO:0009098">
    <property type="term" value="P:L-leucine biosynthetic process"/>
    <property type="evidence" value="ECO:0007669"/>
    <property type="project" value="TreeGrafter"/>
</dbReference>
<dbReference type="CDD" id="cd07943">
    <property type="entry name" value="DRE_TIM_HOA"/>
    <property type="match status" value="1"/>
</dbReference>
<dbReference type="FunFam" id="1.10.8.60:FF:000042">
    <property type="entry name" value="4-hydroxy-2-oxovalerate aldolase"/>
    <property type="match status" value="1"/>
</dbReference>
<dbReference type="Gene3D" id="1.10.8.60">
    <property type="match status" value="1"/>
</dbReference>
<dbReference type="Gene3D" id="3.20.20.70">
    <property type="entry name" value="Aldolase class I"/>
    <property type="match status" value="1"/>
</dbReference>
<dbReference type="HAMAP" id="MF_01656">
    <property type="entry name" value="HOA"/>
    <property type="match status" value="1"/>
</dbReference>
<dbReference type="InterPro" id="IPR050073">
    <property type="entry name" value="2-IPM_HCS-like"/>
</dbReference>
<dbReference type="InterPro" id="IPR017629">
    <property type="entry name" value="4OH_2_O-val_aldolase"/>
</dbReference>
<dbReference type="InterPro" id="IPR013785">
    <property type="entry name" value="Aldolase_TIM"/>
</dbReference>
<dbReference type="InterPro" id="IPR012425">
    <property type="entry name" value="DmpG_comm"/>
</dbReference>
<dbReference type="InterPro" id="IPR035685">
    <property type="entry name" value="DRE_TIM_HOA"/>
</dbReference>
<dbReference type="InterPro" id="IPR000891">
    <property type="entry name" value="PYR_CT"/>
</dbReference>
<dbReference type="NCBIfam" id="TIGR03217">
    <property type="entry name" value="4OH_2_O_val_ald"/>
    <property type="match status" value="1"/>
</dbReference>
<dbReference type="NCBIfam" id="NF006049">
    <property type="entry name" value="PRK08195.1"/>
    <property type="match status" value="1"/>
</dbReference>
<dbReference type="PANTHER" id="PTHR10277:SF9">
    <property type="entry name" value="2-ISOPROPYLMALATE SYNTHASE 1, CHLOROPLASTIC-RELATED"/>
    <property type="match status" value="1"/>
</dbReference>
<dbReference type="PANTHER" id="PTHR10277">
    <property type="entry name" value="HOMOCITRATE SYNTHASE-RELATED"/>
    <property type="match status" value="1"/>
</dbReference>
<dbReference type="Pfam" id="PF07836">
    <property type="entry name" value="DmpG_comm"/>
    <property type="match status" value="1"/>
</dbReference>
<dbReference type="Pfam" id="PF00682">
    <property type="entry name" value="HMGL-like"/>
    <property type="match status" value="1"/>
</dbReference>
<dbReference type="SUPFAM" id="SSF51569">
    <property type="entry name" value="Aldolase"/>
    <property type="match status" value="1"/>
</dbReference>
<dbReference type="SUPFAM" id="SSF89000">
    <property type="entry name" value="post-HMGL domain-like"/>
    <property type="match status" value="1"/>
</dbReference>
<dbReference type="PROSITE" id="PS50991">
    <property type="entry name" value="PYR_CT"/>
    <property type="match status" value="1"/>
</dbReference>
<evidence type="ECO:0000255" key="1">
    <source>
        <dbReference type="HAMAP-Rule" id="MF_01656"/>
    </source>
</evidence>
<sequence length="349" mass="37781">MDKKLYISDVTLRDGSHAIRHQYSVAQARRIAIALDDARVDSIEVAHGDGLQGGSFNYGFGAHTDIEWIKAVASVVKHAKIATLLLPGIGTVRDLRAAYDAGARIARVATHCTEADISRQHIEYAREIGMEAVGFLMMSHMQTPRALAEQAKLMESYGATCCYVVDSGGAMNMNDIRDRMRAFKDTLRPETQTGIHAHHNLSLGIANSIVAVEEGCDRVDASLAGMGAGAGNAPLEVFIAAAARLGWNHGTDLYRLMDAADDIVRPLQDRPVRVDRETLALGYAGVYSSFLRHAERAASKYGLKTVDILVELGRRRMVGGQEDMIVDVALDLCGAREFASSASGRADLI</sequence>
<reference key="1">
    <citation type="journal article" date="2014" name="Stand. Genomic Sci.">
        <title>Complete genome sequence of Burkholderia phymatum STM815(T), a broad host range and efficient nitrogen-fixing symbiont of Mimosa species.</title>
        <authorList>
            <person name="Moulin L."/>
            <person name="Klonowska A."/>
            <person name="Caroline B."/>
            <person name="Booth K."/>
            <person name="Vriezen J.A."/>
            <person name="Melkonian R."/>
            <person name="James E.K."/>
            <person name="Young J.P."/>
            <person name="Bena G."/>
            <person name="Hauser L."/>
            <person name="Land M."/>
            <person name="Kyrpides N."/>
            <person name="Bruce D."/>
            <person name="Chain P."/>
            <person name="Copeland A."/>
            <person name="Pitluck S."/>
            <person name="Woyke T."/>
            <person name="Lizotte-Waniewski M."/>
            <person name="Bristow J."/>
            <person name="Riley M."/>
        </authorList>
    </citation>
    <scope>NUCLEOTIDE SEQUENCE [LARGE SCALE GENOMIC DNA]</scope>
    <source>
        <strain>DSM 17167 / CIP 108236 / LMG 21445 / STM815</strain>
    </source>
</reference>
<gene>
    <name type="ordered locus">Bphy_3510</name>
</gene>
<name>HOA1_PARP8</name>
<comment type="catalytic activity">
    <reaction evidence="1">
        <text>(S)-4-hydroxy-2-oxopentanoate = acetaldehyde + pyruvate</text>
        <dbReference type="Rhea" id="RHEA:22624"/>
        <dbReference type="ChEBI" id="CHEBI:15343"/>
        <dbReference type="ChEBI" id="CHEBI:15361"/>
        <dbReference type="ChEBI" id="CHEBI:73143"/>
        <dbReference type="EC" id="4.1.3.39"/>
    </reaction>
</comment>
<comment type="similarity">
    <text evidence="1">Belongs to the 4-hydroxy-2-oxovalerate aldolase family.</text>
</comment>
<protein>
    <recommendedName>
        <fullName evidence="1">4-hydroxy-2-oxovalerate aldolase 1</fullName>
        <shortName evidence="1">HOA 1</shortName>
        <ecNumber evidence="1">4.1.3.39</ecNumber>
    </recommendedName>
    <alternativeName>
        <fullName evidence="1">4-hydroxy-2-keto-pentanoic acid aldolase 1</fullName>
    </alternativeName>
    <alternativeName>
        <fullName evidence="1">4-hydroxy-2-oxopentanoate aldolase 1</fullName>
    </alternativeName>
</protein>
<proteinExistence type="inferred from homology"/>
<organism>
    <name type="scientific">Paraburkholderia phymatum (strain DSM 17167 / CIP 108236 / LMG 21445 / STM815)</name>
    <name type="common">Burkholderia phymatum</name>
    <dbReference type="NCBI Taxonomy" id="391038"/>
    <lineage>
        <taxon>Bacteria</taxon>
        <taxon>Pseudomonadati</taxon>
        <taxon>Pseudomonadota</taxon>
        <taxon>Betaproteobacteria</taxon>
        <taxon>Burkholderiales</taxon>
        <taxon>Burkholderiaceae</taxon>
        <taxon>Paraburkholderia</taxon>
    </lineage>
</organism>
<keyword id="KW-0058">Aromatic hydrocarbons catabolism</keyword>
<keyword id="KW-0456">Lyase</keyword>
<keyword id="KW-0464">Manganese</keyword>
<keyword id="KW-0479">Metal-binding</keyword>
<keyword id="KW-1185">Reference proteome</keyword>